<reference evidence="8" key="1">
    <citation type="journal article" date="1998" name="Nature">
        <title>Deciphering the biology of Mycobacterium tuberculosis from the complete genome sequence.</title>
        <authorList>
            <person name="Cole S.T."/>
            <person name="Brosch R."/>
            <person name="Parkhill J."/>
            <person name="Garnier T."/>
            <person name="Churcher C.M."/>
            <person name="Harris D.E."/>
            <person name="Gordon S.V."/>
            <person name="Eiglmeier K."/>
            <person name="Gas S."/>
            <person name="Barry C.E. III"/>
            <person name="Tekaia F."/>
            <person name="Badcock K."/>
            <person name="Basham D."/>
            <person name="Brown D."/>
            <person name="Chillingworth T."/>
            <person name="Connor R."/>
            <person name="Davies R.M."/>
            <person name="Devlin K."/>
            <person name="Feltwell T."/>
            <person name="Gentles S."/>
            <person name="Hamlin N."/>
            <person name="Holroyd S."/>
            <person name="Hornsby T."/>
            <person name="Jagels K."/>
            <person name="Krogh A."/>
            <person name="McLean J."/>
            <person name="Moule S."/>
            <person name="Murphy L.D."/>
            <person name="Oliver S."/>
            <person name="Osborne J."/>
            <person name="Quail M.A."/>
            <person name="Rajandream M.A."/>
            <person name="Rogers J."/>
            <person name="Rutter S."/>
            <person name="Seeger K."/>
            <person name="Skelton S."/>
            <person name="Squares S."/>
            <person name="Squares R."/>
            <person name="Sulston J.E."/>
            <person name="Taylor K."/>
            <person name="Whitehead S."/>
            <person name="Barrell B.G."/>
        </authorList>
    </citation>
    <scope>NUCLEOTIDE SEQUENCE [LARGE SCALE GENOMIC DNA]</scope>
    <source>
        <strain>ATCC 25618 / H37Rv</strain>
    </source>
</reference>
<reference key="2">
    <citation type="journal article" date="2010" name="PLoS ONE">
        <title>Portrait of a pathogen: the Mycobacterium tuberculosis proteome in vivo.</title>
        <authorList>
            <person name="Kruh N.A."/>
            <person name="Troudt J."/>
            <person name="Izzo A."/>
            <person name="Prenni J."/>
            <person name="Dobos K.M."/>
        </authorList>
    </citation>
    <scope>INDUCTION</scope>
</reference>
<reference key="3">
    <citation type="journal article" date="2023" name="Microb. Pathog.">
        <title>Late stage specific Rv0109 (PE_PGRS1) protein of Mycobacterium tuberculosis induces mitochondria mediated macrophage apoptosis.</title>
        <authorList>
            <person name="Priyanka X."/>
            <person name="Medha X."/>
            <person name="Bhatt P."/>
            <person name="Joshi H."/>
            <person name="Sharma S."/>
            <person name="Sharma M."/>
        </authorList>
    </citation>
    <scope>FUNCTION</scope>
    <scope>SUBCELLULAR LOCATION</scope>
    <source>
        <strain>H37Rv</strain>
    </source>
</reference>
<reference key="4">
    <citation type="journal article" date="2023" name="Mol. Immunol.">
        <title>Mycobacterium tuberculosis PE_PGRS1 promotes mycobacteria intracellular survival via reducing the concentration of intracellular free Ca2+ and suppressing endoplasmic reticulum stress.</title>
        <authorList>
            <person name="Yu X."/>
            <person name="Huang Y."/>
            <person name="Li Y."/>
            <person name="Li T."/>
            <person name="Yan S."/>
            <person name="Ai X."/>
            <person name="Lv X."/>
            <person name="Fan L."/>
            <person name="Xie J."/>
        </authorList>
    </citation>
    <scope>FUNCTION</scope>
    <scope>SUBCELLULAR LOCATION</scope>
    <scope>DOMAIN</scope>
    <source>
        <strain>H37Rv</strain>
    </source>
</reference>
<feature type="chain" id="PRO_5003947676" description="PE-PGRS family protein PE_PGRS1">
    <location>
        <begin position="1"/>
        <end position="496"/>
    </location>
</feature>
<feature type="domain" description="PE" evidence="1">
    <location>
        <begin position="4"/>
        <end position="94"/>
    </location>
</feature>
<feature type="region of interest" description="Disordered" evidence="2">
    <location>
        <begin position="461"/>
        <end position="480"/>
    </location>
</feature>
<organism>
    <name type="scientific">Mycobacterium tuberculosis (strain ATCC 25618 / H37Rv)</name>
    <dbReference type="NCBI Taxonomy" id="83332"/>
    <lineage>
        <taxon>Bacteria</taxon>
        <taxon>Bacillati</taxon>
        <taxon>Actinomycetota</taxon>
        <taxon>Actinomycetes</taxon>
        <taxon>Mycobacteriales</taxon>
        <taxon>Mycobacteriaceae</taxon>
        <taxon>Mycobacterium</taxon>
        <taxon>Mycobacterium tuberculosis complex</taxon>
    </lineage>
</organism>
<proteinExistence type="evidence at transcript level"/>
<accession>L0T2H7</accession>
<keyword id="KW-0134">Cell wall</keyword>
<keyword id="KW-1045">Host mitochondrion</keyword>
<keyword id="KW-1185">Reference proteome</keyword>
<keyword id="KW-0964">Secreted</keyword>
<keyword id="KW-0843">Virulence</keyword>
<comment type="function">
    <text evidence="5">When expressed in host mitochondria, induces mitochondrial stress which results in mitochondrial membrane depolarization, up-regulation of mitochondrial superoxides and release of cytochrome-C in the cytoplasm (PubMed:36739922). The cytochrome-C in cytoplasm triggers the activation of caspase-9, caspase-3 and caspase-7, leading to the apoptosis of host macrophages (PubMed:36739922). Being a late expressing protein, apoptosis induction by PE_PGRS1 may facilitate the M.tuberculosis survival and silent expansion of its niche at the site of granuloma (PubMed:36739922).</text>
</comment>
<comment type="function">
    <text evidence="4">When expressed in THP-1 macrophages, promotes the survival of mycobacteria within macrophages after a 24- to 48-hour infection by blocking endoplasmic reticulum stress and inhibiting host cell apoptosis (PubMed:36584479). Can chelate excessive intracellular calcium in THP-1 macrophages, which reduces the concentration of intracellular free Ca(2+) and blocks the PERK-eIF2alpha-ATF4 axis, thereby inhibiting the endoplasmic reticulum stress caused by infection (PubMed:36584479). It also reduces the apoptosis of THP-1 macrophages by decreasing the activation of caspase-3 and caspase-9 (PubMed:36584479).</text>
</comment>
<comment type="subcellular location">
    <subcellularLocation>
        <location evidence="4">Secreted</location>
    </subcellularLocation>
    <subcellularLocation>
        <location evidence="4">Secreted</location>
        <location evidence="4">Cell wall</location>
    </subcellularLocation>
    <subcellularLocation>
        <location evidence="5">Host mitochondrion</location>
    </subcellularLocation>
    <text evidence="4 5">Localizes to the cell wall when expressed in M.smegmatis (PubMed:36584479). Localizes to mitochondria of macrophage when expressed in THP-1 macrophages (PubMed:36739922).</text>
</comment>
<comment type="induction">
    <text evidence="3">Expressed in lung granulomas of guinea pigs in late stage of infection (90 days of infection).</text>
</comment>
<comment type="domain">
    <text evidence="4">Contains 7 GGXGXD/NXUX calcium-binding domains.</text>
</comment>
<comment type="similarity">
    <text evidence="7">Belongs to the mycobacterial PE family. PGRS subfamily.</text>
</comment>
<evidence type="ECO:0000255" key="1"/>
<evidence type="ECO:0000256" key="2">
    <source>
        <dbReference type="SAM" id="MobiDB-lite"/>
    </source>
</evidence>
<evidence type="ECO:0000269" key="3">
    <source>
    </source>
</evidence>
<evidence type="ECO:0000269" key="4">
    <source>
    </source>
</evidence>
<evidence type="ECO:0000269" key="5">
    <source>
    </source>
</evidence>
<evidence type="ECO:0000303" key="6">
    <source>
    </source>
</evidence>
<evidence type="ECO:0000305" key="7"/>
<evidence type="ECO:0000312" key="8">
    <source>
        <dbReference type="EMBL" id="CCP42834.1"/>
    </source>
</evidence>
<dbReference type="EMBL" id="AL123456">
    <property type="protein sequence ID" value="CCP42834.1"/>
    <property type="molecule type" value="Genomic_DNA"/>
</dbReference>
<dbReference type="RefSeq" id="WP_010886066.1">
    <property type="nucleotide sequence ID" value="NC_000962.3"/>
</dbReference>
<dbReference type="RefSeq" id="YP_177692.1">
    <property type="nucleotide sequence ID" value="NC_000962.3"/>
</dbReference>
<dbReference type="SMR" id="L0T2H7"/>
<dbReference type="STRING" id="83332.Rv0109"/>
<dbReference type="PaxDb" id="83332-Rv0109"/>
<dbReference type="DNASU" id="886912"/>
<dbReference type="GeneID" id="886912"/>
<dbReference type="KEGG" id="mtu:Rv0109"/>
<dbReference type="PATRIC" id="fig|83332.12.peg.123"/>
<dbReference type="TubercuList" id="Rv0109"/>
<dbReference type="eggNOG" id="COG0657">
    <property type="taxonomic scope" value="Bacteria"/>
</dbReference>
<dbReference type="InParanoid" id="L0T2H7"/>
<dbReference type="OrthoDB" id="4753186at2"/>
<dbReference type="Proteomes" id="UP000001584">
    <property type="component" value="Chromosome"/>
</dbReference>
<dbReference type="GO" id="GO:0005576">
    <property type="term" value="C:extracellular region"/>
    <property type="evidence" value="ECO:0007669"/>
    <property type="project" value="UniProtKB-SubCell"/>
</dbReference>
<dbReference type="GO" id="GO:0033650">
    <property type="term" value="C:host cell mitochondrion"/>
    <property type="evidence" value="ECO:0007669"/>
    <property type="project" value="UniProtKB-SubCell"/>
</dbReference>
<dbReference type="Gene3D" id="1.10.287.850">
    <property type="entry name" value="HP0062-like domain"/>
    <property type="match status" value="1"/>
</dbReference>
<dbReference type="InterPro" id="IPR000084">
    <property type="entry name" value="PE-PGRS_N"/>
</dbReference>
<dbReference type="InterPro" id="IPR048996">
    <property type="entry name" value="PGRS_rpt"/>
</dbReference>
<dbReference type="Pfam" id="PF00934">
    <property type="entry name" value="PE"/>
    <property type="match status" value="1"/>
</dbReference>
<dbReference type="Pfam" id="PF21526">
    <property type="entry name" value="PGRS"/>
    <property type="match status" value="1"/>
</dbReference>
<dbReference type="PRINTS" id="PR01228">
    <property type="entry name" value="EGGSHELL"/>
</dbReference>
<dbReference type="SUPFAM" id="SSF140459">
    <property type="entry name" value="PE/PPE dimer-like"/>
    <property type="match status" value="1"/>
</dbReference>
<protein>
    <recommendedName>
        <fullName evidence="7">PE-PGRS family protein PE_PGRS1</fullName>
    </recommendedName>
    <alternativeName>
        <fullName evidence="6">Late stage specific Rv0109 protein</fullName>
    </alternativeName>
</protein>
<sequence>MSLLITSPATVAAAATHLAGIGSALSTANAAAAAPTTALSVAGADEVSVLIAALFEAYAQEYQALSAQALAFHDQFVQALNMGAVCYAAAETANATPLQALQTVQQNVLTVVNAPTQALLGRPIIGNGANGLPNTGQDGGPGGLLFGNGGNGGSGGVDQAGGNGGAAGLIGNGGSGGVGGPGIAGSAGGAGGAGGLLFGNGGPGGAGGIGTTGDGGPGGAGGNAIGLFGSGGTGGMGGVGGMGGVGNGGNAGNGGTAGLFGHGGAGGAGGIGSADGGLGGGGGNGRFMGNGGVGGAGGYGASGDGGNAGNGGLGGVFGDGGAGGTGGLGDVNGGLAGIGGNAGFVRNGGAGGNGQLGSGAVSSAGGMGGNGGLVFGNGGPGGLGGPGTSAGNGGMGGNAVGLFGQGGAGGAGGSGFGAGIPGGRGGDGGSGGLIGDGGTGGGAGAGDAAASAGGNGGNARLIGNGGDGGPGMFGGPGGAGGSGGTIFGFAGTPGPS</sequence>
<name>PG01_MYCTU</name>
<gene>
    <name evidence="8" type="primary">PE_PGRS1</name>
    <name evidence="8" type="ordered locus">Rv0109</name>
</gene>